<name>PP2B4_ARATH</name>
<accession>Q9ZVR3</accession>
<proteinExistence type="predicted"/>
<dbReference type="EMBL" id="AC005312">
    <property type="protein sequence ID" value="AAC78511.1"/>
    <property type="molecule type" value="Genomic_DNA"/>
</dbReference>
<dbReference type="EMBL" id="CP002685">
    <property type="protein sequence ID" value="AEC05562.1"/>
    <property type="molecule type" value="Genomic_DNA"/>
</dbReference>
<dbReference type="PIR" id="H84434">
    <property type="entry name" value="H84434"/>
</dbReference>
<dbReference type="SMR" id="Q9ZVR3"/>
<dbReference type="PaxDb" id="3702-AT2G02280.1"/>
<dbReference type="EnsemblPlants" id="AT2G02280.1">
    <property type="protein sequence ID" value="AT2G02280.1"/>
    <property type="gene ID" value="AT2G02280"/>
</dbReference>
<dbReference type="GeneID" id="814759"/>
<dbReference type="Gramene" id="AT2G02280.1">
    <property type="protein sequence ID" value="AT2G02280.1"/>
    <property type="gene ID" value="AT2G02280"/>
</dbReference>
<dbReference type="KEGG" id="ath:AT2G02280"/>
<dbReference type="Araport" id="AT2G02280"/>
<dbReference type="TAIR" id="AT2G02280">
    <property type="gene designation" value="PP2-B4"/>
</dbReference>
<dbReference type="HOGENOM" id="CLU_1941081_0_0_1"/>
<dbReference type="InParanoid" id="Q9ZVR3"/>
<dbReference type="PhylomeDB" id="Q9ZVR3"/>
<dbReference type="PRO" id="PR:Q9ZVR3"/>
<dbReference type="Proteomes" id="UP000006548">
    <property type="component" value="Chromosome 2"/>
</dbReference>
<dbReference type="ExpressionAtlas" id="Q9ZVR3">
    <property type="expression patterns" value="baseline and differential"/>
</dbReference>
<dbReference type="GO" id="GO:0030246">
    <property type="term" value="F:carbohydrate binding"/>
    <property type="evidence" value="ECO:0000250"/>
    <property type="project" value="TAIR"/>
</dbReference>
<dbReference type="InterPro" id="IPR025886">
    <property type="entry name" value="PP2-like"/>
</dbReference>
<dbReference type="PANTHER" id="PTHR32278">
    <property type="entry name" value="F-BOX DOMAIN-CONTAINING PROTEIN"/>
    <property type="match status" value="1"/>
</dbReference>
<dbReference type="PANTHER" id="PTHR32278:SF57">
    <property type="entry name" value="F-BOX PROTEIN PP2-B2-RELATED"/>
    <property type="match status" value="1"/>
</dbReference>
<dbReference type="Pfam" id="PF14299">
    <property type="entry name" value="PP2"/>
    <property type="match status" value="1"/>
</dbReference>
<sequence length="144" mass="16551">MNTQILSQKTRYSAYIVYKTIYRFHGFKHIGVGFIGHGTPKAKRWERKDLGNDWLGCKKKFKASKKQKFYSNKSTFTDKPITHLIKLEEGEDGWMATEFGEFFAEGGGLLDCDEIVLSVIDIDYAYWKCGLIIQGIDIRPTKSP</sequence>
<protein>
    <recommendedName>
        <fullName>Putative protein PHLOEM PROTEIN 2-LIKE B4</fullName>
        <shortName>AtPP2-B4</shortName>
    </recommendedName>
</protein>
<reference key="1">
    <citation type="journal article" date="1999" name="Nature">
        <title>Sequence and analysis of chromosome 2 of the plant Arabidopsis thaliana.</title>
        <authorList>
            <person name="Lin X."/>
            <person name="Kaul S."/>
            <person name="Rounsley S.D."/>
            <person name="Shea T.P."/>
            <person name="Benito M.-I."/>
            <person name="Town C.D."/>
            <person name="Fujii C.Y."/>
            <person name="Mason T.M."/>
            <person name="Bowman C.L."/>
            <person name="Barnstead M.E."/>
            <person name="Feldblyum T.V."/>
            <person name="Buell C.R."/>
            <person name="Ketchum K.A."/>
            <person name="Lee J.J."/>
            <person name="Ronning C.M."/>
            <person name="Koo H.L."/>
            <person name="Moffat K.S."/>
            <person name="Cronin L.A."/>
            <person name="Shen M."/>
            <person name="Pai G."/>
            <person name="Van Aken S."/>
            <person name="Umayam L."/>
            <person name="Tallon L.J."/>
            <person name="Gill J.E."/>
            <person name="Adams M.D."/>
            <person name="Carrera A.J."/>
            <person name="Creasy T.H."/>
            <person name="Goodman H.M."/>
            <person name="Somerville C.R."/>
            <person name="Copenhaver G.P."/>
            <person name="Preuss D."/>
            <person name="Nierman W.C."/>
            <person name="White O."/>
            <person name="Eisen J.A."/>
            <person name="Salzberg S.L."/>
            <person name="Fraser C.M."/>
            <person name="Venter J.C."/>
        </authorList>
    </citation>
    <scope>NUCLEOTIDE SEQUENCE [LARGE SCALE GENOMIC DNA]</scope>
    <source>
        <strain>cv. Columbia</strain>
    </source>
</reference>
<reference key="2">
    <citation type="journal article" date="2017" name="Plant J.">
        <title>Araport11: a complete reannotation of the Arabidopsis thaliana reference genome.</title>
        <authorList>
            <person name="Cheng C.Y."/>
            <person name="Krishnakumar V."/>
            <person name="Chan A.P."/>
            <person name="Thibaud-Nissen F."/>
            <person name="Schobel S."/>
            <person name="Town C.D."/>
        </authorList>
    </citation>
    <scope>GENOME REANNOTATION</scope>
    <source>
        <strain>cv. Columbia</strain>
    </source>
</reference>
<reference key="3">
    <citation type="journal article" date="2003" name="Plant Physiol.">
        <title>Diversity of the superfamily of phloem lectins (phloem protein 2) in angiosperms.</title>
        <authorList>
            <person name="Dinant S."/>
            <person name="Clark A.M."/>
            <person name="Zhu Y."/>
            <person name="Vilaine F."/>
            <person name="Palauqui J.-C."/>
            <person name="Kusiak C."/>
            <person name="Thompson G.A."/>
        </authorList>
    </citation>
    <scope>GENE FAMILY</scope>
    <scope>NOMENCLATURE</scope>
</reference>
<keyword id="KW-1185">Reference proteome</keyword>
<organism>
    <name type="scientific">Arabidopsis thaliana</name>
    <name type="common">Mouse-ear cress</name>
    <dbReference type="NCBI Taxonomy" id="3702"/>
    <lineage>
        <taxon>Eukaryota</taxon>
        <taxon>Viridiplantae</taxon>
        <taxon>Streptophyta</taxon>
        <taxon>Embryophyta</taxon>
        <taxon>Tracheophyta</taxon>
        <taxon>Spermatophyta</taxon>
        <taxon>Magnoliopsida</taxon>
        <taxon>eudicotyledons</taxon>
        <taxon>Gunneridae</taxon>
        <taxon>Pentapetalae</taxon>
        <taxon>rosids</taxon>
        <taxon>malvids</taxon>
        <taxon>Brassicales</taxon>
        <taxon>Brassicaceae</taxon>
        <taxon>Camelineae</taxon>
        <taxon>Arabidopsis</taxon>
    </lineage>
</organism>
<gene>
    <name type="primary">PP2B4</name>
    <name type="ordered locus">At2g02280</name>
    <name type="ORF">T16F16.7</name>
</gene>
<feature type="chain" id="PRO_0000285286" description="Putative protein PHLOEM PROTEIN 2-LIKE B4">
    <location>
        <begin position="1"/>
        <end position="144"/>
    </location>
</feature>